<dbReference type="EC" id="6.1.1.17" evidence="1"/>
<dbReference type="EMBL" id="M27221">
    <property type="protein sequence ID" value="AAC35209.1"/>
    <property type="molecule type" value="Genomic_DNA"/>
</dbReference>
<dbReference type="EMBL" id="AL591688">
    <property type="protein sequence ID" value="CAC47482.1"/>
    <property type="molecule type" value="Genomic_DNA"/>
</dbReference>
<dbReference type="PIR" id="A32888">
    <property type="entry name" value="SYRZET"/>
</dbReference>
<dbReference type="RefSeq" id="NP_387009.1">
    <property type="nucleotide sequence ID" value="NC_003047.1"/>
</dbReference>
<dbReference type="RefSeq" id="WP_010970278.1">
    <property type="nucleotide sequence ID" value="NC_003047.1"/>
</dbReference>
<dbReference type="SMR" id="P15189"/>
<dbReference type="EnsemblBacteria" id="CAC47482">
    <property type="protein sequence ID" value="CAC47482"/>
    <property type="gene ID" value="SMc03172"/>
</dbReference>
<dbReference type="KEGG" id="sme:SMc03172"/>
<dbReference type="PATRIC" id="fig|266834.11.peg.4424"/>
<dbReference type="eggNOG" id="COG0008">
    <property type="taxonomic scope" value="Bacteria"/>
</dbReference>
<dbReference type="HOGENOM" id="CLU_015768_6_3_5"/>
<dbReference type="OrthoDB" id="9807503at2"/>
<dbReference type="Proteomes" id="UP000001976">
    <property type="component" value="Chromosome"/>
</dbReference>
<dbReference type="GO" id="GO:0005829">
    <property type="term" value="C:cytosol"/>
    <property type="evidence" value="ECO:0007669"/>
    <property type="project" value="TreeGrafter"/>
</dbReference>
<dbReference type="GO" id="GO:0005524">
    <property type="term" value="F:ATP binding"/>
    <property type="evidence" value="ECO:0007669"/>
    <property type="project" value="UniProtKB-UniRule"/>
</dbReference>
<dbReference type="GO" id="GO:0004818">
    <property type="term" value="F:glutamate-tRNA ligase activity"/>
    <property type="evidence" value="ECO:0007669"/>
    <property type="project" value="UniProtKB-UniRule"/>
</dbReference>
<dbReference type="GO" id="GO:0000049">
    <property type="term" value="F:tRNA binding"/>
    <property type="evidence" value="ECO:0007669"/>
    <property type="project" value="InterPro"/>
</dbReference>
<dbReference type="GO" id="GO:0008270">
    <property type="term" value="F:zinc ion binding"/>
    <property type="evidence" value="ECO:0007669"/>
    <property type="project" value="InterPro"/>
</dbReference>
<dbReference type="GO" id="GO:0006424">
    <property type="term" value="P:glutamyl-tRNA aminoacylation"/>
    <property type="evidence" value="ECO:0007669"/>
    <property type="project" value="UniProtKB-UniRule"/>
</dbReference>
<dbReference type="CDD" id="cd00808">
    <property type="entry name" value="GluRS_core"/>
    <property type="match status" value="1"/>
</dbReference>
<dbReference type="FunFam" id="3.40.50.620:FF:000045">
    <property type="entry name" value="Glutamate--tRNA ligase, mitochondrial"/>
    <property type="match status" value="1"/>
</dbReference>
<dbReference type="Gene3D" id="1.10.10.350">
    <property type="match status" value="1"/>
</dbReference>
<dbReference type="Gene3D" id="3.40.50.620">
    <property type="entry name" value="HUPs"/>
    <property type="match status" value="1"/>
</dbReference>
<dbReference type="HAMAP" id="MF_00022">
    <property type="entry name" value="Glu_tRNA_synth_type1"/>
    <property type="match status" value="1"/>
</dbReference>
<dbReference type="InterPro" id="IPR045462">
    <property type="entry name" value="aa-tRNA-synth_I_cd-bd"/>
</dbReference>
<dbReference type="InterPro" id="IPR020751">
    <property type="entry name" value="aa-tRNA-synth_I_codon-bd_sub2"/>
</dbReference>
<dbReference type="InterPro" id="IPR001412">
    <property type="entry name" value="aa-tRNA-synth_I_CS"/>
</dbReference>
<dbReference type="InterPro" id="IPR008925">
    <property type="entry name" value="aa_tRNA-synth_I_cd-bd_sf"/>
</dbReference>
<dbReference type="InterPro" id="IPR004527">
    <property type="entry name" value="Glu-tRNA-ligase_bac/mito"/>
</dbReference>
<dbReference type="InterPro" id="IPR000924">
    <property type="entry name" value="Glu/Gln-tRNA-synth"/>
</dbReference>
<dbReference type="InterPro" id="IPR020058">
    <property type="entry name" value="Glu/Gln-tRNA-synth_Ib_cat-dom"/>
</dbReference>
<dbReference type="InterPro" id="IPR049940">
    <property type="entry name" value="GluQ/Sye"/>
</dbReference>
<dbReference type="InterPro" id="IPR033910">
    <property type="entry name" value="GluRS_core"/>
</dbReference>
<dbReference type="InterPro" id="IPR014729">
    <property type="entry name" value="Rossmann-like_a/b/a_fold"/>
</dbReference>
<dbReference type="NCBIfam" id="TIGR00464">
    <property type="entry name" value="gltX_bact"/>
    <property type="match status" value="1"/>
</dbReference>
<dbReference type="PANTHER" id="PTHR43311">
    <property type="entry name" value="GLUTAMATE--TRNA LIGASE"/>
    <property type="match status" value="1"/>
</dbReference>
<dbReference type="PANTHER" id="PTHR43311:SF2">
    <property type="entry name" value="GLUTAMATE--TRNA LIGASE, MITOCHONDRIAL-RELATED"/>
    <property type="match status" value="1"/>
</dbReference>
<dbReference type="Pfam" id="PF19269">
    <property type="entry name" value="Anticodon_2"/>
    <property type="match status" value="1"/>
</dbReference>
<dbReference type="Pfam" id="PF00749">
    <property type="entry name" value="tRNA-synt_1c"/>
    <property type="match status" value="1"/>
</dbReference>
<dbReference type="PRINTS" id="PR00987">
    <property type="entry name" value="TRNASYNTHGLU"/>
</dbReference>
<dbReference type="SUPFAM" id="SSF48163">
    <property type="entry name" value="An anticodon-binding domain of class I aminoacyl-tRNA synthetases"/>
    <property type="match status" value="1"/>
</dbReference>
<dbReference type="SUPFAM" id="SSF52374">
    <property type="entry name" value="Nucleotidylyl transferase"/>
    <property type="match status" value="1"/>
</dbReference>
<dbReference type="PROSITE" id="PS00178">
    <property type="entry name" value="AA_TRNA_LIGASE_I"/>
    <property type="match status" value="1"/>
</dbReference>
<sequence>MADSAVRVRIAPSPTGEPHVGTAYIALFNYLFAKKHGGKFILRIEDTDATRSTPEFEKKVLDALKWCGLEWSEGPDIGGPYGPYRQSDRKDIYKPYVEKIVANGHGFRCFCTPERLEQMREAQRAAGKPPKYDGLCLSLSAEEVTSRVDAGEPHVVRMKIPTEGSCKFRDGVYGDVEIPWEAVDMQVLLKADGMPTYHMANVVDDHLMKITHVARGEEWLASVPKHILIYQYLGLEPPVFMHLSLMRNADKSKLSKRKNPTSISYYTALGYLPEALMNFLGLFFIQIAEGEELLTMEELAEKFDPENLSKAGAIFDIQKLDWLNARWIREKLSEEEFAARVLAWAMDNERLKEGLKLSQTRISKLGELPDLAAFLFKSDLGLQPAAFAGVKASPEEMLKILNTVQPDLEKILEWNKDSIETELRASAERMGKKLKAVVAPLFVACSGSQRSLPLFDSMELLGRSVVRQRLKVAAQVVASMAGSGK</sequence>
<accession>P15189</accession>
<reference key="1">
    <citation type="journal article" date="1989" name="J. Bacteriol.">
        <title>Cloning and sequencing of the gltX gene, encoding the glutamyl-tRNA synthetase of Rhizobium meliloti A2.</title>
        <authorList>
            <person name="Laberge S."/>
            <person name="Gagnon Y."/>
            <person name="Bordeleau L.M."/>
            <person name="Lapointe J."/>
        </authorList>
    </citation>
    <scope>NUCLEOTIDE SEQUENCE [GENOMIC DNA]</scope>
    <source>
        <strain>A2</strain>
    </source>
</reference>
<reference key="2">
    <citation type="journal article" date="2001" name="Proc. Natl. Acad. Sci. U.S.A.">
        <title>Analysis of the chromosome sequence of the legume symbiont Sinorhizobium meliloti strain 1021.</title>
        <authorList>
            <person name="Capela D."/>
            <person name="Barloy-Hubler F."/>
            <person name="Gouzy J."/>
            <person name="Bothe G."/>
            <person name="Ampe F."/>
            <person name="Batut J."/>
            <person name="Boistard P."/>
            <person name="Becker A."/>
            <person name="Boutry M."/>
            <person name="Cadieu E."/>
            <person name="Dreano S."/>
            <person name="Gloux S."/>
            <person name="Godrie T."/>
            <person name="Goffeau A."/>
            <person name="Kahn D."/>
            <person name="Kiss E."/>
            <person name="Lelaure V."/>
            <person name="Masuy D."/>
            <person name="Pohl T."/>
            <person name="Portetelle D."/>
            <person name="Puehler A."/>
            <person name="Purnelle B."/>
            <person name="Ramsperger U."/>
            <person name="Renard C."/>
            <person name="Thebault P."/>
            <person name="Vandenbol M."/>
            <person name="Weidner S."/>
            <person name="Galibert F."/>
        </authorList>
    </citation>
    <scope>NUCLEOTIDE SEQUENCE [LARGE SCALE GENOMIC DNA]</scope>
    <source>
        <strain>1021</strain>
    </source>
</reference>
<reference key="3">
    <citation type="journal article" date="2001" name="Science">
        <title>The composite genome of the legume symbiont Sinorhizobium meliloti.</title>
        <authorList>
            <person name="Galibert F."/>
            <person name="Finan T.M."/>
            <person name="Long S.R."/>
            <person name="Puehler A."/>
            <person name="Abola P."/>
            <person name="Ampe F."/>
            <person name="Barloy-Hubler F."/>
            <person name="Barnett M.J."/>
            <person name="Becker A."/>
            <person name="Boistard P."/>
            <person name="Bothe G."/>
            <person name="Boutry M."/>
            <person name="Bowser L."/>
            <person name="Buhrmester J."/>
            <person name="Cadieu E."/>
            <person name="Capela D."/>
            <person name="Chain P."/>
            <person name="Cowie A."/>
            <person name="Davis R.W."/>
            <person name="Dreano S."/>
            <person name="Federspiel N.A."/>
            <person name="Fisher R.F."/>
            <person name="Gloux S."/>
            <person name="Godrie T."/>
            <person name="Goffeau A."/>
            <person name="Golding B."/>
            <person name="Gouzy J."/>
            <person name="Gurjal M."/>
            <person name="Hernandez-Lucas I."/>
            <person name="Hong A."/>
            <person name="Huizar L."/>
            <person name="Hyman R.W."/>
            <person name="Jones T."/>
            <person name="Kahn D."/>
            <person name="Kahn M.L."/>
            <person name="Kalman S."/>
            <person name="Keating D.H."/>
            <person name="Kiss E."/>
            <person name="Komp C."/>
            <person name="Lelaure V."/>
            <person name="Masuy D."/>
            <person name="Palm C."/>
            <person name="Peck M.C."/>
            <person name="Pohl T.M."/>
            <person name="Portetelle D."/>
            <person name="Purnelle B."/>
            <person name="Ramsperger U."/>
            <person name="Surzycki R."/>
            <person name="Thebault P."/>
            <person name="Vandenbol M."/>
            <person name="Vorhoelter F.J."/>
            <person name="Weidner S."/>
            <person name="Wells D.H."/>
            <person name="Wong K."/>
            <person name="Yeh K.-C."/>
            <person name="Batut J."/>
        </authorList>
    </citation>
    <scope>NUCLEOTIDE SEQUENCE [LARGE SCALE GENOMIC DNA]</scope>
    <source>
        <strain>1021</strain>
    </source>
</reference>
<comment type="function">
    <text evidence="1">Catalyzes the attachment of glutamate to tRNA(Glu) in a two-step reaction: glutamate is first activated by ATP to form Glu-AMP and then transferred to the acceptor end of tRNA(Glu).</text>
</comment>
<comment type="catalytic activity">
    <reaction evidence="1">
        <text>tRNA(Glu) + L-glutamate + ATP = L-glutamyl-tRNA(Glu) + AMP + diphosphate</text>
        <dbReference type="Rhea" id="RHEA:23540"/>
        <dbReference type="Rhea" id="RHEA-COMP:9663"/>
        <dbReference type="Rhea" id="RHEA-COMP:9680"/>
        <dbReference type="ChEBI" id="CHEBI:29985"/>
        <dbReference type="ChEBI" id="CHEBI:30616"/>
        <dbReference type="ChEBI" id="CHEBI:33019"/>
        <dbReference type="ChEBI" id="CHEBI:78442"/>
        <dbReference type="ChEBI" id="CHEBI:78520"/>
        <dbReference type="ChEBI" id="CHEBI:456215"/>
        <dbReference type="EC" id="6.1.1.17"/>
    </reaction>
</comment>
<comment type="subunit">
    <text evidence="1">Monomer.</text>
</comment>
<comment type="subcellular location">
    <subcellularLocation>
        <location evidence="1">Cytoplasm</location>
    </subcellularLocation>
</comment>
<comment type="similarity">
    <text evidence="1">Belongs to the class-I aminoacyl-tRNA synthetase family. Glutamate--tRNA ligase type 1 subfamily.</text>
</comment>
<proteinExistence type="inferred from homology"/>
<name>SYE_RHIME</name>
<evidence type="ECO:0000255" key="1">
    <source>
        <dbReference type="HAMAP-Rule" id="MF_00022"/>
    </source>
</evidence>
<evidence type="ECO:0000305" key="2"/>
<protein>
    <recommendedName>
        <fullName evidence="1">Glutamate--tRNA ligase</fullName>
        <ecNumber evidence="1">6.1.1.17</ecNumber>
    </recommendedName>
    <alternativeName>
        <fullName evidence="1">Glutamyl-tRNA synthetase</fullName>
        <shortName evidence="1">GluRS</shortName>
    </alternativeName>
</protein>
<organism>
    <name type="scientific">Rhizobium meliloti (strain 1021)</name>
    <name type="common">Ensifer meliloti</name>
    <name type="synonym">Sinorhizobium meliloti</name>
    <dbReference type="NCBI Taxonomy" id="266834"/>
    <lineage>
        <taxon>Bacteria</taxon>
        <taxon>Pseudomonadati</taxon>
        <taxon>Pseudomonadota</taxon>
        <taxon>Alphaproteobacteria</taxon>
        <taxon>Hyphomicrobiales</taxon>
        <taxon>Rhizobiaceae</taxon>
        <taxon>Sinorhizobium/Ensifer group</taxon>
        <taxon>Sinorhizobium</taxon>
    </lineage>
</organism>
<feature type="chain" id="PRO_0000119633" description="Glutamate--tRNA ligase">
    <location>
        <begin position="1"/>
        <end position="485"/>
    </location>
</feature>
<feature type="short sequence motif" description="'HIGH' region" evidence="1">
    <location>
        <begin position="12"/>
        <end position="22"/>
    </location>
</feature>
<feature type="short sequence motif" description="'KMSKS' region" evidence="1">
    <location>
        <begin position="253"/>
        <end position="257"/>
    </location>
</feature>
<feature type="binding site" evidence="1">
    <location>
        <position position="256"/>
    </location>
    <ligand>
        <name>ATP</name>
        <dbReference type="ChEBI" id="CHEBI:30616"/>
    </ligand>
</feature>
<feature type="sequence conflict" description="In Ref. 1; AAC35209." evidence="2" ref="1">
    <location>
        <position position="427"/>
    </location>
</feature>
<feature type="sequence conflict" description="In Ref. 2." evidence="2" ref="2">
    <original>K</original>
    <variation>KQ</variation>
    <location>
        <position position="485"/>
    </location>
</feature>
<keyword id="KW-0030">Aminoacyl-tRNA synthetase</keyword>
<keyword id="KW-0067">ATP-binding</keyword>
<keyword id="KW-0963">Cytoplasm</keyword>
<keyword id="KW-0436">Ligase</keyword>
<keyword id="KW-0547">Nucleotide-binding</keyword>
<keyword id="KW-0648">Protein biosynthesis</keyword>
<keyword id="KW-1185">Reference proteome</keyword>
<gene>
    <name evidence="1" type="primary">gltX</name>
    <name type="ordered locus">R02903</name>
    <name type="ORF">SMc03172</name>
</gene>